<evidence type="ECO:0000255" key="1">
    <source>
        <dbReference type="HAMAP-Rule" id="MF_00171"/>
    </source>
</evidence>
<accession>A0ALT4</accession>
<comment type="function">
    <text evidence="1">Formation of pseudouridine at positions 38, 39 and 40 in the anticodon stem and loop of transfer RNAs.</text>
</comment>
<comment type="catalytic activity">
    <reaction evidence="1">
        <text>uridine(38/39/40) in tRNA = pseudouridine(38/39/40) in tRNA</text>
        <dbReference type="Rhea" id="RHEA:22376"/>
        <dbReference type="Rhea" id="RHEA-COMP:10085"/>
        <dbReference type="Rhea" id="RHEA-COMP:10087"/>
        <dbReference type="ChEBI" id="CHEBI:65314"/>
        <dbReference type="ChEBI" id="CHEBI:65315"/>
        <dbReference type="EC" id="5.4.99.12"/>
    </reaction>
</comment>
<comment type="subunit">
    <text evidence="1">Homodimer.</text>
</comment>
<comment type="similarity">
    <text evidence="1">Belongs to the tRNA pseudouridine synthase TruA family.</text>
</comment>
<reference key="1">
    <citation type="journal article" date="2006" name="J. Bacteriol.">
        <title>Whole-genome sequence of Listeria welshimeri reveals common steps in genome reduction with Listeria innocua as compared to Listeria monocytogenes.</title>
        <authorList>
            <person name="Hain T."/>
            <person name="Steinweg C."/>
            <person name="Kuenne C.T."/>
            <person name="Billion A."/>
            <person name="Ghai R."/>
            <person name="Chatterjee S.S."/>
            <person name="Domann E."/>
            <person name="Kaerst U."/>
            <person name="Goesmann A."/>
            <person name="Bekel T."/>
            <person name="Bartels D."/>
            <person name="Kaiser O."/>
            <person name="Meyer F."/>
            <person name="Puehler A."/>
            <person name="Weisshaar B."/>
            <person name="Wehland J."/>
            <person name="Liang C."/>
            <person name="Dandekar T."/>
            <person name="Lampidis R."/>
            <person name="Kreft J."/>
            <person name="Goebel W."/>
            <person name="Chakraborty T."/>
        </authorList>
    </citation>
    <scope>NUCLEOTIDE SEQUENCE [LARGE SCALE GENOMIC DNA]</scope>
    <source>
        <strain>ATCC 35897 / DSM 20650 / CCUG 15529 / CIP 8149 / NCTC 11857 / SLCC 5334 / V8</strain>
    </source>
</reference>
<keyword id="KW-0413">Isomerase</keyword>
<keyword id="KW-0819">tRNA processing</keyword>
<sequence length="248" mass="28301">MTRYKAIISYDGSGFYGYQIQPNARTVQAEIEKALKKMHKGKNVRITASGRTDTGVHAKGQVIHFDSDLDITADKFQKALQVMTPFDISFLTVDEAPADFHARFGTVGKEYRYIVKRTKIFDPFSRNFALHYPYELDIAKMKLASECLIGEHDFTSFCSARTERDSKVRTLYSIDFYEEDEETLVIAFQGNGFLYNMVRILTGTLLDAGQGRISSEDITEALLARDRQKLISKTAPPQGLYLWRVDYE</sequence>
<gene>
    <name evidence="1" type="primary">truA</name>
    <name type="ordered locus">lwe2548</name>
</gene>
<proteinExistence type="inferred from homology"/>
<protein>
    <recommendedName>
        <fullName evidence="1">tRNA pseudouridine synthase A</fullName>
        <ecNumber evidence="1">5.4.99.12</ecNumber>
    </recommendedName>
    <alternativeName>
        <fullName evidence="1">tRNA pseudouridine(38-40) synthase</fullName>
    </alternativeName>
    <alternativeName>
        <fullName evidence="1">tRNA pseudouridylate synthase I</fullName>
    </alternativeName>
    <alternativeName>
        <fullName evidence="1">tRNA-uridine isomerase I</fullName>
    </alternativeName>
</protein>
<feature type="chain" id="PRO_1000017107" description="tRNA pseudouridine synthase A">
    <location>
        <begin position="1"/>
        <end position="248"/>
    </location>
</feature>
<feature type="active site" description="Nucleophile" evidence="1">
    <location>
        <position position="53"/>
    </location>
</feature>
<feature type="binding site" evidence="1">
    <location>
        <position position="111"/>
    </location>
    <ligand>
        <name>substrate</name>
    </ligand>
</feature>
<organism>
    <name type="scientific">Listeria welshimeri serovar 6b (strain ATCC 35897 / DSM 20650 / CCUG 15529 / CIP 8149 / NCTC 11857 / SLCC 5334 / V8)</name>
    <dbReference type="NCBI Taxonomy" id="386043"/>
    <lineage>
        <taxon>Bacteria</taxon>
        <taxon>Bacillati</taxon>
        <taxon>Bacillota</taxon>
        <taxon>Bacilli</taxon>
        <taxon>Bacillales</taxon>
        <taxon>Listeriaceae</taxon>
        <taxon>Listeria</taxon>
    </lineage>
</organism>
<name>TRUA_LISW6</name>
<dbReference type="EC" id="5.4.99.12" evidence="1"/>
<dbReference type="EMBL" id="AM263198">
    <property type="protein sequence ID" value="CAK21966.1"/>
    <property type="molecule type" value="Genomic_DNA"/>
</dbReference>
<dbReference type="RefSeq" id="WP_011703272.1">
    <property type="nucleotide sequence ID" value="NC_008555.1"/>
</dbReference>
<dbReference type="SMR" id="A0ALT4"/>
<dbReference type="STRING" id="386043.lwe2548"/>
<dbReference type="GeneID" id="61190472"/>
<dbReference type="KEGG" id="lwe:lwe2548"/>
<dbReference type="eggNOG" id="COG0101">
    <property type="taxonomic scope" value="Bacteria"/>
</dbReference>
<dbReference type="HOGENOM" id="CLU_014673_0_1_9"/>
<dbReference type="OrthoDB" id="9811823at2"/>
<dbReference type="Proteomes" id="UP000000779">
    <property type="component" value="Chromosome"/>
</dbReference>
<dbReference type="GO" id="GO:0003723">
    <property type="term" value="F:RNA binding"/>
    <property type="evidence" value="ECO:0007669"/>
    <property type="project" value="InterPro"/>
</dbReference>
<dbReference type="GO" id="GO:0160147">
    <property type="term" value="F:tRNA pseudouridine(38-40) synthase activity"/>
    <property type="evidence" value="ECO:0007669"/>
    <property type="project" value="UniProtKB-EC"/>
</dbReference>
<dbReference type="GO" id="GO:0031119">
    <property type="term" value="P:tRNA pseudouridine synthesis"/>
    <property type="evidence" value="ECO:0007669"/>
    <property type="project" value="UniProtKB-UniRule"/>
</dbReference>
<dbReference type="CDD" id="cd02570">
    <property type="entry name" value="PseudoU_synth_EcTruA"/>
    <property type="match status" value="1"/>
</dbReference>
<dbReference type="FunFam" id="3.30.70.580:FF:000001">
    <property type="entry name" value="tRNA pseudouridine synthase A"/>
    <property type="match status" value="1"/>
</dbReference>
<dbReference type="Gene3D" id="3.30.70.660">
    <property type="entry name" value="Pseudouridine synthase I, catalytic domain, C-terminal subdomain"/>
    <property type="match status" value="1"/>
</dbReference>
<dbReference type="Gene3D" id="3.30.70.580">
    <property type="entry name" value="Pseudouridine synthase I, catalytic domain, N-terminal subdomain"/>
    <property type="match status" value="1"/>
</dbReference>
<dbReference type="HAMAP" id="MF_00171">
    <property type="entry name" value="TruA"/>
    <property type="match status" value="1"/>
</dbReference>
<dbReference type="InterPro" id="IPR020103">
    <property type="entry name" value="PsdUridine_synth_cat_dom_sf"/>
</dbReference>
<dbReference type="InterPro" id="IPR001406">
    <property type="entry name" value="PsdUridine_synth_TruA"/>
</dbReference>
<dbReference type="InterPro" id="IPR020097">
    <property type="entry name" value="PsdUridine_synth_TruA_a/b_dom"/>
</dbReference>
<dbReference type="InterPro" id="IPR020095">
    <property type="entry name" value="PsdUridine_synth_TruA_C"/>
</dbReference>
<dbReference type="InterPro" id="IPR020094">
    <property type="entry name" value="TruA/RsuA/RluB/E/F_N"/>
</dbReference>
<dbReference type="NCBIfam" id="TIGR00071">
    <property type="entry name" value="hisT_truA"/>
    <property type="match status" value="1"/>
</dbReference>
<dbReference type="PANTHER" id="PTHR11142">
    <property type="entry name" value="PSEUDOURIDYLATE SYNTHASE"/>
    <property type="match status" value="1"/>
</dbReference>
<dbReference type="PANTHER" id="PTHR11142:SF0">
    <property type="entry name" value="TRNA PSEUDOURIDINE SYNTHASE-LIKE 1"/>
    <property type="match status" value="1"/>
</dbReference>
<dbReference type="Pfam" id="PF01416">
    <property type="entry name" value="PseudoU_synth_1"/>
    <property type="match status" value="2"/>
</dbReference>
<dbReference type="PIRSF" id="PIRSF001430">
    <property type="entry name" value="tRNA_psdUrid_synth"/>
    <property type="match status" value="1"/>
</dbReference>
<dbReference type="SUPFAM" id="SSF55120">
    <property type="entry name" value="Pseudouridine synthase"/>
    <property type="match status" value="1"/>
</dbReference>